<protein>
    <recommendedName>
        <fullName evidence="1">Exodeoxyribonuclease 7 large subunit</fullName>
        <ecNumber evidence="1">3.1.11.6</ecNumber>
    </recommendedName>
    <alternativeName>
        <fullName evidence="1">Exodeoxyribonuclease VII large subunit</fullName>
        <shortName evidence="1">Exonuclease VII large subunit</shortName>
    </alternativeName>
</protein>
<comment type="function">
    <text evidence="1">Bidirectionally degrades single-stranded DNA into large acid-insoluble oligonucleotides, which are then degraded further into small acid-soluble oligonucleotides.</text>
</comment>
<comment type="catalytic activity">
    <reaction evidence="1">
        <text>Exonucleolytic cleavage in either 5'- to 3'- or 3'- to 5'-direction to yield nucleoside 5'-phosphates.</text>
        <dbReference type="EC" id="3.1.11.6"/>
    </reaction>
</comment>
<comment type="subunit">
    <text evidence="1">Heterooligomer composed of large and small subunits.</text>
</comment>
<comment type="subcellular location">
    <subcellularLocation>
        <location evidence="1">Cytoplasm</location>
    </subcellularLocation>
</comment>
<comment type="similarity">
    <text evidence="1">Belongs to the XseA family.</text>
</comment>
<feature type="chain" id="PRO_1000205674" description="Exodeoxyribonuclease 7 large subunit">
    <location>
        <begin position="1"/>
        <end position="448"/>
    </location>
</feature>
<sequence length="448" mass="50856">MANPLPVSEVVRYVKRQLDDDVLLRQVAVIGEISNFKRYSSGHCYFTLKDDASRMKAVMFSRDAKQLQFEPKDGMKVIAVSKVTMYEATGDVQLYVELMRQDGIGLLFERYEARKRELEEMGWFDDERKKPLPMFPERVGIVTSPKGAALHDIATTLRRRAPHVAITFAPVAVQGEMAAPQVASAIRWMNERTDCDVLIVGRGGGSIEELWAFNEDVVVEAIYASTIPIISAVGHETDFTLSDFVADVRAATPTAAAELATAMIDAQRKDVERLDNHLHKAVRSQLDESRSRVERMINSYGLKSPRYTISQKRERFAQSEIRLEQGMRRHLTQATHQLRQLSQQLDVKRFSKTLSKQGDEVNHMVERLRRTRPLEQATLQFAQQVGRLHAVSPLAVLSRGYTFIEQDGAYVQNVKQLRDGDVSIRFRDGHAIAEVKERIVGDEERTDI</sequence>
<keyword id="KW-0963">Cytoplasm</keyword>
<keyword id="KW-0269">Exonuclease</keyword>
<keyword id="KW-0378">Hydrolase</keyword>
<keyword id="KW-0540">Nuclease</keyword>
<evidence type="ECO:0000255" key="1">
    <source>
        <dbReference type="HAMAP-Rule" id="MF_00378"/>
    </source>
</evidence>
<dbReference type="EC" id="3.1.11.6" evidence="1"/>
<dbReference type="EMBL" id="CP001615">
    <property type="protein sequence ID" value="ACQ69453.1"/>
    <property type="molecule type" value="Genomic_DNA"/>
</dbReference>
<dbReference type="RefSeq" id="WP_012726572.1">
    <property type="nucleotide sequence ID" value="NC_012673.1"/>
</dbReference>
<dbReference type="SMR" id="C4L3F5"/>
<dbReference type="STRING" id="360911.EAT1b_0521"/>
<dbReference type="KEGG" id="eat:EAT1b_0521"/>
<dbReference type="eggNOG" id="COG1570">
    <property type="taxonomic scope" value="Bacteria"/>
</dbReference>
<dbReference type="HOGENOM" id="CLU_023625_3_1_9"/>
<dbReference type="OrthoDB" id="9802795at2"/>
<dbReference type="Proteomes" id="UP000000716">
    <property type="component" value="Chromosome"/>
</dbReference>
<dbReference type="GO" id="GO:0005737">
    <property type="term" value="C:cytoplasm"/>
    <property type="evidence" value="ECO:0007669"/>
    <property type="project" value="UniProtKB-SubCell"/>
</dbReference>
<dbReference type="GO" id="GO:0009318">
    <property type="term" value="C:exodeoxyribonuclease VII complex"/>
    <property type="evidence" value="ECO:0007669"/>
    <property type="project" value="InterPro"/>
</dbReference>
<dbReference type="GO" id="GO:0008855">
    <property type="term" value="F:exodeoxyribonuclease VII activity"/>
    <property type="evidence" value="ECO:0007669"/>
    <property type="project" value="UniProtKB-UniRule"/>
</dbReference>
<dbReference type="GO" id="GO:0003676">
    <property type="term" value="F:nucleic acid binding"/>
    <property type="evidence" value="ECO:0007669"/>
    <property type="project" value="InterPro"/>
</dbReference>
<dbReference type="GO" id="GO:0006308">
    <property type="term" value="P:DNA catabolic process"/>
    <property type="evidence" value="ECO:0007669"/>
    <property type="project" value="UniProtKB-UniRule"/>
</dbReference>
<dbReference type="CDD" id="cd04489">
    <property type="entry name" value="ExoVII_LU_OBF"/>
    <property type="match status" value="1"/>
</dbReference>
<dbReference type="HAMAP" id="MF_00378">
    <property type="entry name" value="Exonuc_7_L"/>
    <property type="match status" value="1"/>
</dbReference>
<dbReference type="InterPro" id="IPR003753">
    <property type="entry name" value="Exonuc_VII_L"/>
</dbReference>
<dbReference type="InterPro" id="IPR020579">
    <property type="entry name" value="Exonuc_VII_lsu_C"/>
</dbReference>
<dbReference type="InterPro" id="IPR025824">
    <property type="entry name" value="OB-fold_nuc-bd_dom"/>
</dbReference>
<dbReference type="NCBIfam" id="TIGR00237">
    <property type="entry name" value="xseA"/>
    <property type="match status" value="1"/>
</dbReference>
<dbReference type="PANTHER" id="PTHR30008">
    <property type="entry name" value="EXODEOXYRIBONUCLEASE 7 LARGE SUBUNIT"/>
    <property type="match status" value="1"/>
</dbReference>
<dbReference type="PANTHER" id="PTHR30008:SF0">
    <property type="entry name" value="EXODEOXYRIBONUCLEASE 7 LARGE SUBUNIT"/>
    <property type="match status" value="1"/>
</dbReference>
<dbReference type="Pfam" id="PF02601">
    <property type="entry name" value="Exonuc_VII_L"/>
    <property type="match status" value="1"/>
</dbReference>
<dbReference type="Pfam" id="PF13742">
    <property type="entry name" value="tRNA_anti_2"/>
    <property type="match status" value="1"/>
</dbReference>
<name>EX7L_EXISA</name>
<reference key="1">
    <citation type="journal article" date="2011" name="J. Bacteriol.">
        <title>Complete genome sequence of the Thermophilic Bacterium Exiguobacterium sp. AT1b.</title>
        <authorList>
            <person name="Vishnivetskaya T.A."/>
            <person name="Lucas S."/>
            <person name="Copeland A."/>
            <person name="Lapidus A."/>
            <person name="Glavina del Rio T."/>
            <person name="Dalin E."/>
            <person name="Tice H."/>
            <person name="Bruce D.C."/>
            <person name="Goodwin L.A."/>
            <person name="Pitluck S."/>
            <person name="Saunders E."/>
            <person name="Brettin T."/>
            <person name="Detter C."/>
            <person name="Han C."/>
            <person name="Larimer F."/>
            <person name="Land M.L."/>
            <person name="Hauser L.J."/>
            <person name="Kyrpides N.C."/>
            <person name="Ovchinnikova G."/>
            <person name="Kathariou S."/>
            <person name="Ramaley R.F."/>
            <person name="Rodrigues D.F."/>
            <person name="Hendrix C."/>
            <person name="Richardson P."/>
            <person name="Tiedje J.M."/>
        </authorList>
    </citation>
    <scope>NUCLEOTIDE SEQUENCE [LARGE SCALE GENOMIC DNA]</scope>
    <source>
        <strain>ATCC BAA-1283 / AT1b</strain>
    </source>
</reference>
<organism>
    <name type="scientific">Exiguobacterium sp. (strain ATCC BAA-1283 / AT1b)</name>
    <dbReference type="NCBI Taxonomy" id="360911"/>
    <lineage>
        <taxon>Bacteria</taxon>
        <taxon>Bacillati</taxon>
        <taxon>Bacillota</taxon>
        <taxon>Bacilli</taxon>
        <taxon>Bacillales</taxon>
        <taxon>Bacillales Family XII. Incertae Sedis</taxon>
        <taxon>Exiguobacterium</taxon>
    </lineage>
</organism>
<proteinExistence type="inferred from homology"/>
<gene>
    <name evidence="1" type="primary">xseA</name>
    <name type="ordered locus">EAT1b_0521</name>
</gene>
<accession>C4L3F5</accession>